<gene>
    <name type="primary">PHS1</name>
</gene>
<reference key="1">
    <citation type="journal article" date="2009" name="Proc. Natl. Acad. Sci. U.S.A.">
        <title>Monoterpenes in the glandular trichomes of tomato are synthesized from a neryl diphosphate precursor rather than geranyl diphosphate.</title>
        <authorList>
            <person name="Schilmiller A.L."/>
            <person name="Schauvinhold I."/>
            <person name="Larson M."/>
            <person name="Xu R."/>
            <person name="Charbonneau A.L."/>
            <person name="Schmidt A."/>
            <person name="Wilkerson C."/>
            <person name="Last R.L."/>
            <person name="Pichersky E."/>
        </authorList>
    </citation>
    <scope>NUCLEOTIDE SEQUENCE [MRNA]</scope>
    <scope>CATALYTIC ACTIVITY</scope>
    <scope>BIOPHYSICOCHEMICAL PROPERTIES</scope>
    <scope>TISSUE SPECIFICITY</scope>
    <scope>FUNCTION</scope>
</reference>
<comment type="function">
    <text evidence="3">Monoterpene synthase catalyzing the production of beta-phellandrene from neryl diphosphate. Also produces lower amounts of delta-2-carene, alpha-phellandrene and limonene. When incubated in vitro with geranyl diphosphate, catalyzes the formation of acyclic myrcene and ocimene as major products in addition to beta-phellandrene.</text>
</comment>
<comment type="catalytic activity">
    <reaction evidence="3">
        <text>neryl diphosphate = beta-phellandrene + diphosphate</text>
        <dbReference type="Rhea" id="RHEA:27830"/>
        <dbReference type="ChEBI" id="CHEBI:33019"/>
        <dbReference type="ChEBI" id="CHEBI:48741"/>
        <dbReference type="ChEBI" id="CHEBI:57665"/>
        <dbReference type="EC" id="4.2.3.51"/>
    </reaction>
</comment>
<comment type="cofactor">
    <cofactor evidence="1">
        <name>Mg(2+)</name>
        <dbReference type="ChEBI" id="CHEBI:18420"/>
    </cofactor>
</comment>
<comment type="biophysicochemical properties">
    <kinetics>
        <KM evidence="3">9.1 uM for neryl diphosphate</KM>
        <KM evidence="3">2900 uM for geranyl diphosphate</KM>
    </kinetics>
</comment>
<comment type="subcellular location">
    <subcellularLocation>
        <location evidence="4">Plastid</location>
        <location evidence="4">Chloroplast</location>
    </subcellularLocation>
</comment>
<comment type="tissue specificity">
    <text evidence="3">Trichomes.</text>
</comment>
<comment type="domain">
    <text evidence="1">The Asp-Asp-Xaa-Xaa-Asp/Glu (DDXXD/E) motif is important for the catalytic activity, presumably through binding to Mg(2+).</text>
</comment>
<comment type="similarity">
    <text evidence="4">Belongs to the terpene synthase family. Tpse subfamily.</text>
</comment>
<sequence>MIVGYRSTIITLSHPKLGNGKTISSNAIFQRSCRVRCSHSTTSSMNGFEDARDRIRESFGKLELSPSSYDTAWVAMVPSRHSLNEPCFPQCLDWIIENQREDGSWGLNPTHPLLLKDSLSSTLACLLALTKWRVGDEQIKRGLGFIETYGWAVDNKDQISPLGFEVIFSSMIKSAEKLDLNLPLNLHLVNLVKCKRDSTIKRNVEYMGEGVGELCDWKEMIKLHQRQNGSLFDSPATTAAALIYHQHDQKCYQYLNSIFQQHKNWVPTMYPTKVHSLLCLVDTLQNLGVHRHFKSEIKKALDEIYRLWQQKNEQIFSNVTHCAMAFRLLRMSYYDVSSDELAEFVDEEHFFATNGKYKSHVEILELHKASQLAIDHEKDDILDKINNWTRAFMEQKLLNNGFIDRMSKKEVELALRKFYTTSHLAENRRYIKSYEENNFKILKAAYRSPNINNKDLLAFSIHDFELCQAQHREELQQLKRWFEDYRLDQLGLAERYIHASYLFGVTVIPEPELSDARLMYAKYVMLLTIVDDHFESFASKDECFNIIELVERWDDYASVGYKSEKVKVFFSVFYKSIEELATIAEIKQGRSVKNHLINLWLELMKLMLMERVEWCSGKTIPSIEEYLYVTSITFCAKLIPLSTQYFLGIKISKDLLESDEICGLWNCSGRVMRILNDLQDSKREQKEVSINLVTLLMKSMSEEEAIMKIKEILEMNRRELLKMVLVQKKGSQLPQLCKDIFWRTSKWAHFTYSQTDGYRIAEEMKNHIDEVFYKPLNH</sequence>
<evidence type="ECO:0000250" key="1"/>
<evidence type="ECO:0000255" key="2"/>
<evidence type="ECO:0000269" key="3">
    <source>
    </source>
</evidence>
<evidence type="ECO:0000305" key="4"/>
<dbReference type="EC" id="4.2.3.51"/>
<dbReference type="EMBL" id="FJ797957">
    <property type="protein sequence ID" value="ACO56896.1"/>
    <property type="molecule type" value="mRNA"/>
</dbReference>
<dbReference type="RefSeq" id="NP_001234629.1">
    <property type="nucleotide sequence ID" value="NM_001247700.1"/>
</dbReference>
<dbReference type="SMR" id="C1K5M3"/>
<dbReference type="FunCoup" id="C1K5M3">
    <property type="interactions" value="275"/>
</dbReference>
<dbReference type="STRING" id="4081.C1K5M3"/>
<dbReference type="PaxDb" id="4081-Solyc08g005670.2.1"/>
<dbReference type="GeneID" id="100316883"/>
<dbReference type="KEGG" id="sly:100316883"/>
<dbReference type="eggNOG" id="ENOG502SI1N">
    <property type="taxonomic scope" value="Eukaryota"/>
</dbReference>
<dbReference type="InParanoid" id="C1K5M3"/>
<dbReference type="OrthoDB" id="2343925at2759"/>
<dbReference type="BioCyc" id="MetaCyc:MONOMER-15450"/>
<dbReference type="BRENDA" id="4.2.3.51">
    <property type="organism ID" value="3101"/>
</dbReference>
<dbReference type="Proteomes" id="UP000004994">
    <property type="component" value="Unplaced"/>
</dbReference>
<dbReference type="ExpressionAtlas" id="C1K5M3">
    <property type="expression patterns" value="baseline and differential"/>
</dbReference>
<dbReference type="GO" id="GO:0009507">
    <property type="term" value="C:chloroplast"/>
    <property type="evidence" value="ECO:0000318"/>
    <property type="project" value="GO_Central"/>
</dbReference>
<dbReference type="GO" id="GO:0000287">
    <property type="term" value="F:magnesium ion binding"/>
    <property type="evidence" value="ECO:0000318"/>
    <property type="project" value="GO_Central"/>
</dbReference>
<dbReference type="GO" id="GO:0010333">
    <property type="term" value="F:terpene synthase activity"/>
    <property type="evidence" value="ECO:0000318"/>
    <property type="project" value="GO_Central"/>
</dbReference>
<dbReference type="GO" id="GO:0009686">
    <property type="term" value="P:gibberellin biosynthetic process"/>
    <property type="evidence" value="ECO:0000318"/>
    <property type="project" value="GO_Central"/>
</dbReference>
<dbReference type="FunFam" id="1.10.600.10:FF:000036">
    <property type="entry name" value="cis-abienol synthase, chloroplastic"/>
    <property type="match status" value="1"/>
</dbReference>
<dbReference type="FunFam" id="1.50.10.130:FF:000002">
    <property type="entry name" value="Ent-copalyl diphosphate synthase, chloroplastic"/>
    <property type="match status" value="1"/>
</dbReference>
<dbReference type="Gene3D" id="1.50.10.160">
    <property type="match status" value="1"/>
</dbReference>
<dbReference type="Gene3D" id="1.10.600.10">
    <property type="entry name" value="Farnesyl Diphosphate Synthase"/>
    <property type="match status" value="1"/>
</dbReference>
<dbReference type="Gene3D" id="1.50.10.130">
    <property type="entry name" value="Terpene synthase, N-terminal domain"/>
    <property type="match status" value="1"/>
</dbReference>
<dbReference type="InterPro" id="IPR008949">
    <property type="entry name" value="Isoprenoid_synthase_dom_sf"/>
</dbReference>
<dbReference type="InterPro" id="IPR001906">
    <property type="entry name" value="Terpene_synth_N"/>
</dbReference>
<dbReference type="InterPro" id="IPR036965">
    <property type="entry name" value="Terpene_synth_N_sf"/>
</dbReference>
<dbReference type="InterPro" id="IPR050148">
    <property type="entry name" value="Terpene_synthase-like"/>
</dbReference>
<dbReference type="InterPro" id="IPR005630">
    <property type="entry name" value="Terpene_synthase_metal-bd"/>
</dbReference>
<dbReference type="InterPro" id="IPR008930">
    <property type="entry name" value="Terpenoid_cyclase/PrenylTrfase"/>
</dbReference>
<dbReference type="PANTHER" id="PTHR31739:SF33">
    <property type="entry name" value="CIS-ABIENOL SYNTHASE, CHLOROPLASTIC"/>
    <property type="match status" value="1"/>
</dbReference>
<dbReference type="PANTHER" id="PTHR31739">
    <property type="entry name" value="ENT-COPALYL DIPHOSPHATE SYNTHASE, CHLOROPLASTIC"/>
    <property type="match status" value="1"/>
</dbReference>
<dbReference type="Pfam" id="PF01397">
    <property type="entry name" value="Terpene_synth"/>
    <property type="match status" value="1"/>
</dbReference>
<dbReference type="Pfam" id="PF03936">
    <property type="entry name" value="Terpene_synth_C"/>
    <property type="match status" value="1"/>
</dbReference>
<dbReference type="SFLD" id="SFLDG01014">
    <property type="entry name" value="Terpene_Cyclase_Like_1_N-term"/>
    <property type="match status" value="1"/>
</dbReference>
<dbReference type="SUPFAM" id="SSF48239">
    <property type="entry name" value="Terpenoid cyclases/Protein prenyltransferases"/>
    <property type="match status" value="2"/>
</dbReference>
<dbReference type="SUPFAM" id="SSF48576">
    <property type="entry name" value="Terpenoid synthases"/>
    <property type="match status" value="1"/>
</dbReference>
<accession>C1K5M3</accession>
<organism>
    <name type="scientific">Solanum lycopersicum</name>
    <name type="common">Tomato</name>
    <name type="synonym">Lycopersicon esculentum</name>
    <dbReference type="NCBI Taxonomy" id="4081"/>
    <lineage>
        <taxon>Eukaryota</taxon>
        <taxon>Viridiplantae</taxon>
        <taxon>Streptophyta</taxon>
        <taxon>Embryophyta</taxon>
        <taxon>Tracheophyta</taxon>
        <taxon>Spermatophyta</taxon>
        <taxon>Magnoliopsida</taxon>
        <taxon>eudicotyledons</taxon>
        <taxon>Gunneridae</taxon>
        <taxon>Pentapetalae</taxon>
        <taxon>asterids</taxon>
        <taxon>lamiids</taxon>
        <taxon>Solanales</taxon>
        <taxon>Solanaceae</taxon>
        <taxon>Solanoideae</taxon>
        <taxon>Solaneae</taxon>
        <taxon>Solanum</taxon>
        <taxon>Solanum subgen. Lycopersicon</taxon>
    </lineage>
</organism>
<feature type="transit peptide" description="Chloroplast" evidence="2">
    <location>
        <begin position="1"/>
        <end position="36"/>
    </location>
</feature>
<feature type="chain" id="PRO_0000405121" description="Beta-phellandrene synthase (neryl-diphosphate-cyclizing), chloroplastic">
    <location>
        <begin position="37"/>
        <end position="778"/>
    </location>
</feature>
<feature type="short sequence motif" description="DDXXD motif">
    <location>
        <begin position="531"/>
        <end position="535"/>
    </location>
</feature>
<feature type="binding site" evidence="1">
    <location>
        <position position="531"/>
    </location>
    <ligand>
        <name>Mg(2+)</name>
        <dbReference type="ChEBI" id="CHEBI:18420"/>
        <label>1</label>
    </ligand>
</feature>
<feature type="binding site" evidence="1">
    <location>
        <position position="531"/>
    </location>
    <ligand>
        <name>Mg(2+)</name>
        <dbReference type="ChEBI" id="CHEBI:18420"/>
        <label>2</label>
    </ligand>
</feature>
<feature type="binding site" evidence="1">
    <location>
        <position position="676"/>
    </location>
    <ligand>
        <name>Mg(2+)</name>
        <dbReference type="ChEBI" id="CHEBI:18420"/>
        <label>3</label>
    </ligand>
</feature>
<feature type="binding site" evidence="1">
    <location>
        <position position="684"/>
    </location>
    <ligand>
        <name>Mg(2+)</name>
        <dbReference type="ChEBI" id="CHEBI:18420"/>
        <label>3</label>
    </ligand>
</feature>
<name>PHS1_SOLLC</name>
<proteinExistence type="evidence at protein level"/>
<protein>
    <recommendedName>
        <fullName>Beta-phellandrene synthase (neryl-diphosphate-cyclizing), chloroplastic</fullName>
        <ecNumber>4.2.3.51</ecNumber>
    </recommendedName>
</protein>
<keyword id="KW-0150">Chloroplast</keyword>
<keyword id="KW-0456">Lyase</keyword>
<keyword id="KW-0460">Magnesium</keyword>
<keyword id="KW-0479">Metal-binding</keyword>
<keyword id="KW-0934">Plastid</keyword>
<keyword id="KW-1185">Reference proteome</keyword>
<keyword id="KW-0809">Transit peptide</keyword>